<evidence type="ECO:0000255" key="1">
    <source>
        <dbReference type="HAMAP-Rule" id="MF_01047"/>
    </source>
</evidence>
<comment type="similarity">
    <text evidence="1">Belongs to the UPF0227 family.</text>
</comment>
<accession>A9MGA5</accession>
<organism>
    <name type="scientific">Salmonella arizonae (strain ATCC BAA-731 / CDC346-86 / RSK2980)</name>
    <dbReference type="NCBI Taxonomy" id="41514"/>
    <lineage>
        <taxon>Bacteria</taxon>
        <taxon>Pseudomonadati</taxon>
        <taxon>Pseudomonadota</taxon>
        <taxon>Gammaproteobacteria</taxon>
        <taxon>Enterobacterales</taxon>
        <taxon>Enterobacteriaceae</taxon>
        <taxon>Salmonella</taxon>
    </lineage>
</organism>
<keyword id="KW-1185">Reference proteome</keyword>
<feature type="chain" id="PRO_1000084414" description="UPF0227 protein YcfP">
    <location>
        <begin position="1"/>
        <end position="180"/>
    </location>
</feature>
<reference key="1">
    <citation type="submission" date="2007-11" db="EMBL/GenBank/DDBJ databases">
        <authorList>
            <consortium name="The Salmonella enterica serovar Arizonae Genome Sequencing Project"/>
            <person name="McClelland M."/>
            <person name="Sanderson E.K."/>
            <person name="Porwollik S."/>
            <person name="Spieth J."/>
            <person name="Clifton W.S."/>
            <person name="Fulton R."/>
            <person name="Chunyan W."/>
            <person name="Wollam A."/>
            <person name="Shah N."/>
            <person name="Pepin K."/>
            <person name="Bhonagiri V."/>
            <person name="Nash W."/>
            <person name="Johnson M."/>
            <person name="Thiruvilangam P."/>
            <person name="Wilson R."/>
        </authorList>
    </citation>
    <scope>NUCLEOTIDE SEQUENCE [LARGE SCALE GENOMIC DNA]</scope>
    <source>
        <strain>ATCC BAA-731 / CDC346-86 / RSK2980</strain>
    </source>
</reference>
<protein>
    <recommendedName>
        <fullName evidence="1">UPF0227 protein YcfP</fullName>
    </recommendedName>
</protein>
<gene>
    <name evidence="1" type="primary">ycfP</name>
    <name type="ordered locus">SARI_01781</name>
</gene>
<sequence>MIIYLHGFDSNSPGNHEKVLQLQFIDPDVRLVSYSTRHPKHDMQHLLKEVDKMLQLNVDDRPLICGVGLGGYWAERIGFLCDIRQVVFNPNLFPYENMEGKIDRPEEYADIATKCVTNFREKNRDRCLVILSRHDEALDSQRSAEALHPYYEIVWDEEQTHKFKNISPHLQRIKAFKTLG</sequence>
<proteinExistence type="inferred from homology"/>
<name>YCFP_SALAR</name>
<dbReference type="EMBL" id="CP000880">
    <property type="protein sequence ID" value="ABX21667.1"/>
    <property type="molecule type" value="Genomic_DNA"/>
</dbReference>
<dbReference type="SMR" id="A9MGA5"/>
<dbReference type="STRING" id="41514.SARI_01781"/>
<dbReference type="ESTHER" id="salty-ycfp">
    <property type="family name" value="abh_upf00227"/>
</dbReference>
<dbReference type="KEGG" id="ses:SARI_01781"/>
<dbReference type="HOGENOM" id="CLU_128769_0_0_6"/>
<dbReference type="Proteomes" id="UP000002084">
    <property type="component" value="Chromosome"/>
</dbReference>
<dbReference type="FunFam" id="3.40.50.1820:FF:000007">
    <property type="entry name" value="UPF0227 protein YcfP"/>
    <property type="match status" value="1"/>
</dbReference>
<dbReference type="Gene3D" id="3.40.50.1820">
    <property type="entry name" value="alpha/beta hydrolase"/>
    <property type="match status" value="1"/>
</dbReference>
<dbReference type="HAMAP" id="MF_01047">
    <property type="entry name" value="UPF0227"/>
    <property type="match status" value="1"/>
</dbReference>
<dbReference type="InterPro" id="IPR029058">
    <property type="entry name" value="AB_hydrolase_fold"/>
</dbReference>
<dbReference type="InterPro" id="IPR022987">
    <property type="entry name" value="UPF0227"/>
</dbReference>
<dbReference type="InterPro" id="IPR008886">
    <property type="entry name" value="UPF0227/Esterase_YqiA"/>
</dbReference>
<dbReference type="NCBIfam" id="NF003431">
    <property type="entry name" value="PRK04940.1"/>
    <property type="match status" value="1"/>
</dbReference>
<dbReference type="PANTHER" id="PTHR35602">
    <property type="entry name" value="ESTERASE YQIA-RELATED"/>
    <property type="match status" value="1"/>
</dbReference>
<dbReference type="PANTHER" id="PTHR35602:SF2">
    <property type="entry name" value="UPF0227 PROTEIN YCFP"/>
    <property type="match status" value="1"/>
</dbReference>
<dbReference type="Pfam" id="PF05728">
    <property type="entry name" value="UPF0227"/>
    <property type="match status" value="1"/>
</dbReference>
<dbReference type="SUPFAM" id="SSF53474">
    <property type="entry name" value="alpha/beta-Hydrolases"/>
    <property type="match status" value="1"/>
</dbReference>